<protein>
    <recommendedName>
        <fullName>Rho-related GTP-binding protein RhoC</fullName>
    </recommendedName>
    <alternativeName>
        <fullName>Rho cDNA clone 9</fullName>
        <shortName>h9</shortName>
    </alternativeName>
</protein>
<name>RHOC_HUMAN</name>
<proteinExistence type="evidence at protein level"/>
<accession>P08134</accession>
<accession>B3KSW1</accession>
<accession>Q6ICN3</accession>
<organism>
    <name type="scientific">Homo sapiens</name>
    <name type="common">Human</name>
    <dbReference type="NCBI Taxonomy" id="9606"/>
    <lineage>
        <taxon>Eukaryota</taxon>
        <taxon>Metazoa</taxon>
        <taxon>Chordata</taxon>
        <taxon>Craniata</taxon>
        <taxon>Vertebrata</taxon>
        <taxon>Euteleostomi</taxon>
        <taxon>Mammalia</taxon>
        <taxon>Eutheria</taxon>
        <taxon>Euarchontoglires</taxon>
        <taxon>Primates</taxon>
        <taxon>Haplorrhini</taxon>
        <taxon>Catarrhini</taxon>
        <taxon>Hominidae</taxon>
        <taxon>Homo</taxon>
    </lineage>
</organism>
<sequence>MAAIRKKLVIVGDGACGKTCLLIVFSKDQFPEVYVPTVFENYIADIEVDGKQVELALWDTAGQEDYDRLRPLSYPDTDVILMCFSIDSPDSLENIPEKWTPEVKHFCPNVPIILVGNKKDLRQDEHTRRELAKMKQEPVRSEEGRDMANRISAFGYLECSAKTKEGVREVFEMATRAGLQVRKNKRRRGCPIL</sequence>
<reference key="1">
    <citation type="journal article" date="1988" name="Nucleic Acids Res.">
        <title>Coding sequence of human rho cDNAs clone 6 and clone 9.</title>
        <authorList>
            <person name="Chardin P."/>
            <person name="Madaule P."/>
            <person name="Tavitian A."/>
        </authorList>
    </citation>
    <scope>NUCLEOTIDE SEQUENCE [MRNA]</scope>
</reference>
<reference key="2">
    <citation type="submission" date="1993-10" db="EMBL/GenBank/DDBJ databases">
        <authorList>
            <person name="Fagan K.P."/>
            <person name="Oliveira L."/>
            <person name="Pittler S.J."/>
        </authorList>
    </citation>
    <scope>NUCLEOTIDE SEQUENCE [MRNA]</scope>
    <source>
        <tissue>Retina</tissue>
    </source>
</reference>
<reference key="3">
    <citation type="submission" date="2002-04" db="EMBL/GenBank/DDBJ databases">
        <title>cDNA clones of human proteins involved in signal transduction sequenced by the Guthrie cDNA resource center (www.cdna.org).</title>
        <authorList>
            <person name="Puhl H.L. III"/>
            <person name="Ikeda S.R."/>
            <person name="Aronstam R.S."/>
        </authorList>
    </citation>
    <scope>NUCLEOTIDE SEQUENCE [LARGE SCALE MRNA]</scope>
    <source>
        <tissue>Brain</tissue>
    </source>
</reference>
<reference key="4">
    <citation type="submission" date="2004-05" db="EMBL/GenBank/DDBJ databases">
        <title>Cloning of human full open reading frames in Gateway(TM) system entry vector (pDONR201).</title>
        <authorList>
            <person name="Ebert L."/>
            <person name="Schick M."/>
            <person name="Neubert P."/>
            <person name="Schatten R."/>
            <person name="Henze S."/>
            <person name="Korn B."/>
        </authorList>
    </citation>
    <scope>NUCLEOTIDE SEQUENCE [LARGE SCALE MRNA]</scope>
</reference>
<reference key="5">
    <citation type="submission" date="2004-10" db="EMBL/GenBank/DDBJ databases">
        <title>Cloning of human full-length CDSs in BD Creator(TM) system donor vector.</title>
        <authorList>
            <person name="Kalnine N."/>
            <person name="Chen X."/>
            <person name="Rolfs A."/>
            <person name="Halleck A."/>
            <person name="Hines L."/>
            <person name="Eisenstein S."/>
            <person name="Koundinya M."/>
            <person name="Raphael J."/>
            <person name="Moreira D."/>
            <person name="Kelley T."/>
            <person name="LaBaer J."/>
            <person name="Lin Y."/>
            <person name="Phelan M."/>
            <person name="Farmer A."/>
        </authorList>
    </citation>
    <scope>NUCLEOTIDE SEQUENCE [LARGE SCALE MRNA]</scope>
</reference>
<reference key="6">
    <citation type="journal article" date="2004" name="Nat. Genet.">
        <title>Complete sequencing and characterization of 21,243 full-length human cDNAs.</title>
        <authorList>
            <person name="Ota T."/>
            <person name="Suzuki Y."/>
            <person name="Nishikawa T."/>
            <person name="Otsuki T."/>
            <person name="Sugiyama T."/>
            <person name="Irie R."/>
            <person name="Wakamatsu A."/>
            <person name="Hayashi K."/>
            <person name="Sato H."/>
            <person name="Nagai K."/>
            <person name="Kimura K."/>
            <person name="Makita H."/>
            <person name="Sekine M."/>
            <person name="Obayashi M."/>
            <person name="Nishi T."/>
            <person name="Shibahara T."/>
            <person name="Tanaka T."/>
            <person name="Ishii S."/>
            <person name="Yamamoto J."/>
            <person name="Saito K."/>
            <person name="Kawai Y."/>
            <person name="Isono Y."/>
            <person name="Nakamura Y."/>
            <person name="Nagahari K."/>
            <person name="Murakami K."/>
            <person name="Yasuda T."/>
            <person name="Iwayanagi T."/>
            <person name="Wagatsuma M."/>
            <person name="Shiratori A."/>
            <person name="Sudo H."/>
            <person name="Hosoiri T."/>
            <person name="Kaku Y."/>
            <person name="Kodaira H."/>
            <person name="Kondo H."/>
            <person name="Sugawara M."/>
            <person name="Takahashi M."/>
            <person name="Kanda K."/>
            <person name="Yokoi T."/>
            <person name="Furuya T."/>
            <person name="Kikkawa E."/>
            <person name="Omura Y."/>
            <person name="Abe K."/>
            <person name="Kamihara K."/>
            <person name="Katsuta N."/>
            <person name="Sato K."/>
            <person name="Tanikawa M."/>
            <person name="Yamazaki M."/>
            <person name="Ninomiya K."/>
            <person name="Ishibashi T."/>
            <person name="Yamashita H."/>
            <person name="Murakawa K."/>
            <person name="Fujimori K."/>
            <person name="Tanai H."/>
            <person name="Kimata M."/>
            <person name="Watanabe M."/>
            <person name="Hiraoka S."/>
            <person name="Chiba Y."/>
            <person name="Ishida S."/>
            <person name="Ono Y."/>
            <person name="Takiguchi S."/>
            <person name="Watanabe S."/>
            <person name="Yosida M."/>
            <person name="Hotuta T."/>
            <person name="Kusano J."/>
            <person name="Kanehori K."/>
            <person name="Takahashi-Fujii A."/>
            <person name="Hara H."/>
            <person name="Tanase T.-O."/>
            <person name="Nomura Y."/>
            <person name="Togiya S."/>
            <person name="Komai F."/>
            <person name="Hara R."/>
            <person name="Takeuchi K."/>
            <person name="Arita M."/>
            <person name="Imose N."/>
            <person name="Musashino K."/>
            <person name="Yuuki H."/>
            <person name="Oshima A."/>
            <person name="Sasaki N."/>
            <person name="Aotsuka S."/>
            <person name="Yoshikawa Y."/>
            <person name="Matsunawa H."/>
            <person name="Ichihara T."/>
            <person name="Shiohata N."/>
            <person name="Sano S."/>
            <person name="Moriya S."/>
            <person name="Momiyama H."/>
            <person name="Satoh N."/>
            <person name="Takami S."/>
            <person name="Terashima Y."/>
            <person name="Suzuki O."/>
            <person name="Nakagawa S."/>
            <person name="Senoh A."/>
            <person name="Mizoguchi H."/>
            <person name="Goto Y."/>
            <person name="Shimizu F."/>
            <person name="Wakebe H."/>
            <person name="Hishigaki H."/>
            <person name="Watanabe T."/>
            <person name="Sugiyama A."/>
            <person name="Takemoto M."/>
            <person name="Kawakami B."/>
            <person name="Yamazaki M."/>
            <person name="Watanabe K."/>
            <person name="Kumagai A."/>
            <person name="Itakura S."/>
            <person name="Fukuzumi Y."/>
            <person name="Fujimori Y."/>
            <person name="Komiyama M."/>
            <person name="Tashiro H."/>
            <person name="Tanigami A."/>
            <person name="Fujiwara T."/>
            <person name="Ono T."/>
            <person name="Yamada K."/>
            <person name="Fujii Y."/>
            <person name="Ozaki K."/>
            <person name="Hirao M."/>
            <person name="Ohmori Y."/>
            <person name="Kawabata A."/>
            <person name="Hikiji T."/>
            <person name="Kobatake N."/>
            <person name="Inagaki H."/>
            <person name="Ikema Y."/>
            <person name="Okamoto S."/>
            <person name="Okitani R."/>
            <person name="Kawakami T."/>
            <person name="Noguchi S."/>
            <person name="Itoh T."/>
            <person name="Shigeta K."/>
            <person name="Senba T."/>
            <person name="Matsumura K."/>
            <person name="Nakajima Y."/>
            <person name="Mizuno T."/>
            <person name="Morinaga M."/>
            <person name="Sasaki M."/>
            <person name="Togashi T."/>
            <person name="Oyama M."/>
            <person name="Hata H."/>
            <person name="Watanabe M."/>
            <person name="Komatsu T."/>
            <person name="Mizushima-Sugano J."/>
            <person name="Satoh T."/>
            <person name="Shirai Y."/>
            <person name="Takahashi Y."/>
            <person name="Nakagawa K."/>
            <person name="Okumura K."/>
            <person name="Nagase T."/>
            <person name="Nomura N."/>
            <person name="Kikuchi H."/>
            <person name="Masuho Y."/>
            <person name="Yamashita R."/>
            <person name="Nakai K."/>
            <person name="Yada T."/>
            <person name="Nakamura Y."/>
            <person name="Ohara O."/>
            <person name="Isogai T."/>
            <person name="Sugano S."/>
        </authorList>
    </citation>
    <scope>NUCLEOTIDE SEQUENCE [LARGE SCALE MRNA]</scope>
    <source>
        <tissue>Cerebellum</tissue>
    </source>
</reference>
<reference key="7">
    <citation type="journal article" date="2006" name="Nature">
        <title>The DNA sequence and biological annotation of human chromosome 1.</title>
        <authorList>
            <person name="Gregory S.G."/>
            <person name="Barlow K.F."/>
            <person name="McLay K.E."/>
            <person name="Kaul R."/>
            <person name="Swarbreck D."/>
            <person name="Dunham A."/>
            <person name="Scott C.E."/>
            <person name="Howe K.L."/>
            <person name="Woodfine K."/>
            <person name="Spencer C.C.A."/>
            <person name="Jones M.C."/>
            <person name="Gillson C."/>
            <person name="Searle S."/>
            <person name="Zhou Y."/>
            <person name="Kokocinski F."/>
            <person name="McDonald L."/>
            <person name="Evans R."/>
            <person name="Phillips K."/>
            <person name="Atkinson A."/>
            <person name="Cooper R."/>
            <person name="Jones C."/>
            <person name="Hall R.E."/>
            <person name="Andrews T.D."/>
            <person name="Lloyd C."/>
            <person name="Ainscough R."/>
            <person name="Almeida J.P."/>
            <person name="Ambrose K.D."/>
            <person name="Anderson F."/>
            <person name="Andrew R.W."/>
            <person name="Ashwell R.I.S."/>
            <person name="Aubin K."/>
            <person name="Babbage A.K."/>
            <person name="Bagguley C.L."/>
            <person name="Bailey J."/>
            <person name="Beasley H."/>
            <person name="Bethel G."/>
            <person name="Bird C.P."/>
            <person name="Bray-Allen S."/>
            <person name="Brown J.Y."/>
            <person name="Brown A.J."/>
            <person name="Buckley D."/>
            <person name="Burton J."/>
            <person name="Bye J."/>
            <person name="Carder C."/>
            <person name="Chapman J.C."/>
            <person name="Clark S.Y."/>
            <person name="Clarke G."/>
            <person name="Clee C."/>
            <person name="Cobley V."/>
            <person name="Collier R.E."/>
            <person name="Corby N."/>
            <person name="Coville G.J."/>
            <person name="Davies J."/>
            <person name="Deadman R."/>
            <person name="Dunn M."/>
            <person name="Earthrowl M."/>
            <person name="Ellington A.G."/>
            <person name="Errington H."/>
            <person name="Frankish A."/>
            <person name="Frankland J."/>
            <person name="French L."/>
            <person name="Garner P."/>
            <person name="Garnett J."/>
            <person name="Gay L."/>
            <person name="Ghori M.R.J."/>
            <person name="Gibson R."/>
            <person name="Gilby L.M."/>
            <person name="Gillett W."/>
            <person name="Glithero R.J."/>
            <person name="Grafham D.V."/>
            <person name="Griffiths C."/>
            <person name="Griffiths-Jones S."/>
            <person name="Grocock R."/>
            <person name="Hammond S."/>
            <person name="Harrison E.S.I."/>
            <person name="Hart E."/>
            <person name="Haugen E."/>
            <person name="Heath P.D."/>
            <person name="Holmes S."/>
            <person name="Holt K."/>
            <person name="Howden P.J."/>
            <person name="Hunt A.R."/>
            <person name="Hunt S.E."/>
            <person name="Hunter G."/>
            <person name="Isherwood J."/>
            <person name="James R."/>
            <person name="Johnson C."/>
            <person name="Johnson D."/>
            <person name="Joy A."/>
            <person name="Kay M."/>
            <person name="Kershaw J.K."/>
            <person name="Kibukawa M."/>
            <person name="Kimberley A.M."/>
            <person name="King A."/>
            <person name="Knights A.J."/>
            <person name="Lad H."/>
            <person name="Laird G."/>
            <person name="Lawlor S."/>
            <person name="Leongamornlert D.A."/>
            <person name="Lloyd D.M."/>
            <person name="Loveland J."/>
            <person name="Lovell J."/>
            <person name="Lush M.J."/>
            <person name="Lyne R."/>
            <person name="Martin S."/>
            <person name="Mashreghi-Mohammadi M."/>
            <person name="Matthews L."/>
            <person name="Matthews N.S.W."/>
            <person name="McLaren S."/>
            <person name="Milne S."/>
            <person name="Mistry S."/>
            <person name="Moore M.J.F."/>
            <person name="Nickerson T."/>
            <person name="O'Dell C.N."/>
            <person name="Oliver K."/>
            <person name="Palmeiri A."/>
            <person name="Palmer S.A."/>
            <person name="Parker A."/>
            <person name="Patel D."/>
            <person name="Pearce A.V."/>
            <person name="Peck A.I."/>
            <person name="Pelan S."/>
            <person name="Phelps K."/>
            <person name="Phillimore B.J."/>
            <person name="Plumb R."/>
            <person name="Rajan J."/>
            <person name="Raymond C."/>
            <person name="Rouse G."/>
            <person name="Saenphimmachak C."/>
            <person name="Sehra H.K."/>
            <person name="Sheridan E."/>
            <person name="Shownkeen R."/>
            <person name="Sims S."/>
            <person name="Skuce C.D."/>
            <person name="Smith M."/>
            <person name="Steward C."/>
            <person name="Subramanian S."/>
            <person name="Sycamore N."/>
            <person name="Tracey A."/>
            <person name="Tromans A."/>
            <person name="Van Helmond Z."/>
            <person name="Wall M."/>
            <person name="Wallis J.M."/>
            <person name="White S."/>
            <person name="Whitehead S.L."/>
            <person name="Wilkinson J.E."/>
            <person name="Willey D.L."/>
            <person name="Williams H."/>
            <person name="Wilming L."/>
            <person name="Wray P.W."/>
            <person name="Wu Z."/>
            <person name="Coulson A."/>
            <person name="Vaudin M."/>
            <person name="Sulston J.E."/>
            <person name="Durbin R.M."/>
            <person name="Hubbard T."/>
            <person name="Wooster R."/>
            <person name="Dunham I."/>
            <person name="Carter N.P."/>
            <person name="McVean G."/>
            <person name="Ross M.T."/>
            <person name="Harrow J."/>
            <person name="Olson M.V."/>
            <person name="Beck S."/>
            <person name="Rogers J."/>
            <person name="Bentley D.R."/>
        </authorList>
    </citation>
    <scope>NUCLEOTIDE SEQUENCE [LARGE SCALE GENOMIC DNA]</scope>
</reference>
<reference key="8">
    <citation type="submission" date="2005-07" db="EMBL/GenBank/DDBJ databases">
        <authorList>
            <person name="Mural R.J."/>
            <person name="Istrail S."/>
            <person name="Sutton G.G."/>
            <person name="Florea L."/>
            <person name="Halpern A.L."/>
            <person name="Mobarry C.M."/>
            <person name="Lippert R."/>
            <person name="Walenz B."/>
            <person name="Shatkay H."/>
            <person name="Dew I."/>
            <person name="Miller J.R."/>
            <person name="Flanigan M.J."/>
            <person name="Edwards N.J."/>
            <person name="Bolanos R."/>
            <person name="Fasulo D."/>
            <person name="Halldorsson B.V."/>
            <person name="Hannenhalli S."/>
            <person name="Turner R."/>
            <person name="Yooseph S."/>
            <person name="Lu F."/>
            <person name="Nusskern D.R."/>
            <person name="Shue B.C."/>
            <person name="Zheng X.H."/>
            <person name="Zhong F."/>
            <person name="Delcher A.L."/>
            <person name="Huson D.H."/>
            <person name="Kravitz S.A."/>
            <person name="Mouchard L."/>
            <person name="Reinert K."/>
            <person name="Remington K.A."/>
            <person name="Clark A.G."/>
            <person name="Waterman M.S."/>
            <person name="Eichler E.E."/>
            <person name="Adams M.D."/>
            <person name="Hunkapiller M.W."/>
            <person name="Myers E.W."/>
            <person name="Venter J.C."/>
        </authorList>
    </citation>
    <scope>NUCLEOTIDE SEQUENCE [LARGE SCALE GENOMIC DNA]</scope>
</reference>
<reference key="9">
    <citation type="journal article" date="2004" name="Genome Res.">
        <title>The status, quality, and expansion of the NIH full-length cDNA project: the Mammalian Gene Collection (MGC).</title>
        <authorList>
            <consortium name="The MGC Project Team"/>
        </authorList>
    </citation>
    <scope>NUCLEOTIDE SEQUENCE [LARGE SCALE MRNA]</scope>
    <source>
        <tissue>Skin</tissue>
    </source>
</reference>
<reference key="10">
    <citation type="journal article" date="1996" name="Mol. Cell. Biol.">
        <title>The p160 RhoA-binding kinase ROK alpha is a member of a kinase family and is involved in the reorganization of the cytoskeleton.</title>
        <authorList>
            <person name="Leung T."/>
            <person name="Chen X.-Q."/>
            <person name="Manser E."/>
            <person name="Lim L."/>
        </authorList>
    </citation>
    <scope>INTERACTION WITH ROCK1 AND ROCK2</scope>
</reference>
<reference key="11">
    <citation type="journal article" date="2001" name="J. Biol. Chem.">
        <title>AKAP-Lbc anchors protein kinase A and nucleates Galpha 12-selective Rho-mediated stress fiber formation.</title>
        <authorList>
            <person name="Diviani D."/>
            <person name="Soderling J."/>
            <person name="Scott J.D."/>
        </authorList>
    </citation>
    <scope>INTERACTION WITH AKAP13</scope>
</reference>
<reference key="12">
    <citation type="journal article" date="2006" name="Mol. Biol. Cell">
        <title>Dissecting the role of Rho-mediated signaling in contractile ring formation.</title>
        <authorList>
            <person name="Kamijo K."/>
            <person name="Ohara N."/>
            <person name="Abe M."/>
            <person name="Uchimura T."/>
            <person name="Hosoya H."/>
            <person name="Lee J.S."/>
            <person name="Miki T."/>
        </authorList>
    </citation>
    <scope>FUNCTION</scope>
    <scope>SUBCELLULAR LOCATION</scope>
</reference>
<reference key="13">
    <citation type="journal article" date="2010" name="Nat. Cell Biol.">
        <title>Regulation of Rho GTPase crosstalk, degradation and activity by RhoGDI1.</title>
        <authorList>
            <person name="Boulter E."/>
            <person name="Garcia-Mata R."/>
            <person name="Guilluy C."/>
            <person name="Dubash A."/>
            <person name="Rossi G."/>
            <person name="Brennwald P.J."/>
            <person name="Burridge K."/>
        </authorList>
    </citation>
    <scope>INTERACTION WITH ARHGDIA</scope>
</reference>
<reference key="14">
    <citation type="journal article" date="2011" name="BMC Syst. Biol.">
        <title>Initial characterization of the human central proteome.</title>
        <authorList>
            <person name="Burkard T.R."/>
            <person name="Planyavsky M."/>
            <person name="Kaupe I."/>
            <person name="Breitwieser F.P."/>
            <person name="Buerckstuemmer T."/>
            <person name="Bennett K.L."/>
            <person name="Superti-Furga G."/>
            <person name="Colinge J."/>
        </authorList>
    </citation>
    <scope>IDENTIFICATION BY MASS SPECTROMETRY [LARGE SCALE ANALYSIS]</scope>
</reference>
<reference key="15">
    <citation type="journal article" date="2011" name="Mol. Cell. Biol.">
        <title>The Rho target PRK2 regulates apical junction formation in human bronchial epithelial cells.</title>
        <authorList>
            <person name="Wallace S.W."/>
            <person name="Magalhaes A."/>
            <person name="Hall A."/>
        </authorList>
    </citation>
    <scope>FUNCTION</scope>
    <scope>INTERACTION WITH PKN2</scope>
</reference>
<reference key="16">
    <citation type="journal article" date="2013" name="Nat. Struct. Mol. Biol.">
        <title>A bacterial toxin catalyzing tyrosine glycosylation of Rho and deamidation of Gq and Gi proteins.</title>
        <authorList>
            <person name="Jank T."/>
            <person name="Bogdanovic X."/>
            <person name="Wirth C."/>
            <person name="Haaf E."/>
            <person name="Spoerner M."/>
            <person name="Boehmer K.E."/>
            <person name="Steinemann M."/>
            <person name="Orth J.H."/>
            <person name="Kalbitzer H.R."/>
            <person name="Warscheid B."/>
            <person name="Hunte C."/>
            <person name="Aktories K."/>
        </authorList>
    </citation>
    <scope>GLYCOSYLATION AT TYR-34 (MICROBIAL INFECTION)</scope>
</reference>
<reference key="17">
    <citation type="journal article" date="2014" name="Cell. Microbiol.">
        <title>Haemorrhagic toxin and lethal toxin from Clostridium sordellii strain vpi9048: molecular characterization and comparative analysis of substrate specificity of the large clostridial glucosylating toxins.</title>
        <authorList>
            <person name="Genth H."/>
            <person name="Pauillac S."/>
            <person name="Schelle I."/>
            <person name="Bouvet P."/>
            <person name="Bouchier C."/>
            <person name="Varela-Chavez C."/>
            <person name="Just I."/>
            <person name="Popoff M.R."/>
        </authorList>
    </citation>
    <scope>GLYCOSYLATION AT THR-37 (MICROBIAL INFECTION)</scope>
</reference>
<reference key="18">
    <citation type="journal article" date="2016" name="J. Cell Sci.">
        <title>RHO binding to FAM65A regulates Golgi reorientation during cell migration.</title>
        <authorList>
            <person name="Mardakheh F.K."/>
            <person name="Self A."/>
            <person name="Marshall C.J."/>
        </authorList>
    </citation>
    <scope>INTERACTION WITH RIPOR1</scope>
</reference>
<reference key="19">
    <citation type="journal article" date="2005" name="Nature">
        <title>Structural and mechanistic insights into the interaction between Rho and mammalian Dia.</title>
        <authorList>
            <person name="Rose R."/>
            <person name="Weyand M."/>
            <person name="Lammers M."/>
            <person name="Ishizaki T."/>
            <person name="Ahmadian M.R."/>
            <person name="Wittinghofer A."/>
        </authorList>
    </citation>
    <scope>X-RAY CRYSTALLOGRAPHY (3.0 ANGSTROMS) IN COMPLEX WITH DIAPH1</scope>
</reference>
<keyword id="KW-0002">3D-structure</keyword>
<keyword id="KW-0013">ADP-ribosylation</keyword>
<keyword id="KW-1003">Cell membrane</keyword>
<keyword id="KW-0325">Glycoprotein</keyword>
<keyword id="KW-0342">GTP-binding</keyword>
<keyword id="KW-0449">Lipoprotein</keyword>
<keyword id="KW-0472">Membrane</keyword>
<keyword id="KW-0488">Methylation</keyword>
<keyword id="KW-0547">Nucleotide-binding</keyword>
<keyword id="KW-0636">Prenylation</keyword>
<keyword id="KW-1267">Proteomics identification</keyword>
<keyword id="KW-1185">Reference proteome</keyword>
<gene>
    <name type="primary">RHOC</name>
    <name type="synonym">ARH9</name>
    <name type="synonym">ARHC</name>
</gene>
<evidence type="ECO:0000250" key="1"/>
<evidence type="ECO:0000250" key="2">
    <source>
        <dbReference type="UniProtKB" id="P62745"/>
    </source>
</evidence>
<evidence type="ECO:0000250" key="3">
    <source>
        <dbReference type="UniProtKB" id="Q62159"/>
    </source>
</evidence>
<evidence type="ECO:0000255" key="4"/>
<evidence type="ECO:0000269" key="5">
    <source>
    </source>
</evidence>
<evidence type="ECO:0000269" key="6">
    <source>
    </source>
</evidence>
<evidence type="ECO:0000269" key="7">
    <source>
    </source>
</evidence>
<evidence type="ECO:0000269" key="8">
    <source>
    </source>
</evidence>
<evidence type="ECO:0000269" key="9">
    <source>
    </source>
</evidence>
<evidence type="ECO:0000269" key="10">
    <source>
    </source>
</evidence>
<evidence type="ECO:0000269" key="11">
    <source>
    </source>
</evidence>
<evidence type="ECO:0000269" key="12">
    <source>
    </source>
</evidence>
<evidence type="ECO:0000269" key="13">
    <source>
    </source>
</evidence>
<evidence type="ECO:0000305" key="14"/>
<evidence type="ECO:0007829" key="15">
    <source>
        <dbReference type="PDB" id="2GCO"/>
    </source>
</evidence>
<comment type="function">
    <text evidence="7 9">Regulates a signal transduction pathway linking plasma membrane receptors to the assembly of focal adhesions and actin stress fibers. Serves as a microtubule-dependent signal that is required for the myosin contractile ring formation during cell cycle cytokinesis. Regulates apical junction formation in bronchial epithelial cells.</text>
</comment>
<comment type="subunit">
    <text evidence="1 3 5 6 8 9 12 13">Interacts with RTKN (By similarity). Interacts with AKAP13 (PubMed:11546812). Interacts with DIAPH1 (PubMed:15864301). Interacts with PKN2 (PubMed:20974804). Interacts with ROCK1 and ROCK2 (PubMed:8816443). Interacts with ARHGDIA (PubMed:20400958). Interacts with RIPOR1 (PubMed:27807006).</text>
</comment>
<comment type="interaction">
    <interactant intactId="EBI-747589">
        <id>P08134</id>
    </interactant>
    <interactant intactId="EBI-602762">
        <id>Q07960</id>
        <label>ARHGAP1</label>
    </interactant>
    <organismsDiffer>false</organismsDiffer>
    <experiments>2</experiments>
</comment>
<comment type="interaction">
    <interactant intactId="EBI-747589">
        <id>P08134</id>
    </interactant>
    <interactant intactId="EBI-2817289">
        <id>Q9Y4D1</id>
        <label>DAAM1</label>
    </interactant>
    <organismsDiffer>false</organismsDiffer>
    <experiments>3</experiments>
</comment>
<comment type="interaction">
    <interactant intactId="EBI-747589">
        <id>P08134</id>
    </interactant>
    <interactant intactId="EBI-3959709">
        <id>O60610</id>
        <label>DIAPH1</label>
    </interactant>
    <organismsDiffer>false</organismsDiffer>
    <experiments>2</experiments>
</comment>
<comment type="interaction">
    <interactant intactId="EBI-747589">
        <id>P08134</id>
    </interactant>
    <interactant intactId="EBI-2798942">
        <id>Q9Y4F9</id>
        <label>RIPOR2</label>
    </interactant>
    <organismsDiffer>false</organismsDiffer>
    <experiments>5</experiments>
</comment>
<comment type="interaction">
    <interactant intactId="EBI-747589">
        <id>P08134</id>
    </interactant>
    <interactant intactId="EBI-12010512">
        <id>Q96MK2</id>
        <label>RIPOR3</label>
    </interactant>
    <organismsDiffer>false</organismsDiffer>
    <experiments>3</experiments>
</comment>
<comment type="subcellular location">
    <subcellularLocation>
        <location evidence="14">Cell membrane</location>
        <topology evidence="14">Lipid-anchor</topology>
        <orientation evidence="14">Cytoplasmic side</orientation>
    </subcellularLocation>
    <subcellularLocation>
        <location evidence="7">Cleavage furrow</location>
    </subcellularLocation>
    <text>Translocates to the equatorial region before furrow formation in a ECT2-dependent manner.</text>
</comment>
<comment type="PTM">
    <text evidence="10">(Microbial infection) Glycosylated at Tyr-34 by Photorhabdus asymbiotica toxin PAU_02230. Mono-O-GlcNAcylation by PAU_02230 inhibits downstream signaling by an impaired interaction with diverse regulator and effector proteins of Rho and leads to actin disassembly.</text>
</comment>
<comment type="PTM">
    <text evidence="11">(Microbial infection) Glucosylated at Thr-37 by C.difficile toxins TcdA and TcdB in the colonic epithelium (PubMed:24905543). Monoglucosylation completely prevents the recognition of the downstream effector, blocking the GTPases in their inactive form, leading to actin cytoskeleton disruption (PubMed:24905543).</text>
</comment>
<comment type="similarity">
    <text evidence="14">Belongs to the small GTPase superfamily. Rho family.</text>
</comment>
<comment type="online information" name="Atlas of Genetics and Cytogenetics in Oncology and Haematology">
    <link uri="https://atlasgeneticsoncology.org/gene/42110/RHOC"/>
</comment>
<dbReference type="EMBL" id="X06821">
    <property type="protein sequence ID" value="CAA29969.1"/>
    <property type="molecule type" value="mRNA"/>
</dbReference>
<dbReference type="EMBL" id="L25081">
    <property type="protein sequence ID" value="AAC33179.1"/>
    <property type="molecule type" value="mRNA"/>
</dbReference>
<dbReference type="EMBL" id="AF498972">
    <property type="protein sequence ID" value="AAM21119.1"/>
    <property type="molecule type" value="mRNA"/>
</dbReference>
<dbReference type="EMBL" id="CR450360">
    <property type="protein sequence ID" value="CAG29356.1"/>
    <property type="molecule type" value="mRNA"/>
</dbReference>
<dbReference type="EMBL" id="BT019448">
    <property type="protein sequence ID" value="AAV38255.1"/>
    <property type="molecule type" value="mRNA"/>
</dbReference>
<dbReference type="EMBL" id="AK094474">
    <property type="protein sequence ID" value="BAG52873.1"/>
    <property type="molecule type" value="mRNA"/>
</dbReference>
<dbReference type="EMBL" id="AL603832">
    <property type="status" value="NOT_ANNOTATED_CDS"/>
    <property type="molecule type" value="Genomic_DNA"/>
</dbReference>
<dbReference type="EMBL" id="CH471122">
    <property type="protein sequence ID" value="EAW56534.1"/>
    <property type="molecule type" value="Genomic_DNA"/>
</dbReference>
<dbReference type="EMBL" id="BC007245">
    <property type="protein sequence ID" value="AAH07245.1"/>
    <property type="molecule type" value="mRNA"/>
</dbReference>
<dbReference type="EMBL" id="BC009177">
    <property type="protein sequence ID" value="AAH09177.1"/>
    <property type="molecule type" value="mRNA"/>
</dbReference>
<dbReference type="EMBL" id="BC052808">
    <property type="protein sequence ID" value="AAH52808.1"/>
    <property type="molecule type" value="mRNA"/>
</dbReference>
<dbReference type="CCDS" id="CCDS854.1"/>
<dbReference type="PIR" id="S01029">
    <property type="entry name" value="TVHURC"/>
</dbReference>
<dbReference type="RefSeq" id="NP_001036143.1">
    <property type="nucleotide sequence ID" value="NM_001042678.2"/>
</dbReference>
<dbReference type="RefSeq" id="NP_001036144.1">
    <property type="nucleotide sequence ID" value="NM_001042679.2"/>
</dbReference>
<dbReference type="RefSeq" id="NP_786886.1">
    <property type="nucleotide sequence ID" value="NM_175744.5"/>
</dbReference>
<dbReference type="PDB" id="1Z2C">
    <property type="method" value="X-ray"/>
    <property type="resolution" value="3.00 A"/>
    <property type="chains" value="A/C=1-193"/>
</dbReference>
<dbReference type="PDB" id="2GCN">
    <property type="method" value="X-ray"/>
    <property type="resolution" value="1.85 A"/>
    <property type="chains" value="A=1-181"/>
</dbReference>
<dbReference type="PDB" id="2GCO">
    <property type="method" value="X-ray"/>
    <property type="resolution" value="1.40 A"/>
    <property type="chains" value="A/B=1-181"/>
</dbReference>
<dbReference type="PDB" id="2GCP">
    <property type="method" value="X-ray"/>
    <property type="resolution" value="2.15 A"/>
    <property type="chains" value="A=1-181"/>
</dbReference>
<dbReference type="PDBsum" id="1Z2C"/>
<dbReference type="PDBsum" id="2GCN"/>
<dbReference type="PDBsum" id="2GCO"/>
<dbReference type="PDBsum" id="2GCP"/>
<dbReference type="SMR" id="P08134"/>
<dbReference type="BioGRID" id="106882">
    <property type="interactions" value="584"/>
</dbReference>
<dbReference type="FunCoup" id="P08134">
    <property type="interactions" value="1457"/>
</dbReference>
<dbReference type="IntAct" id="P08134">
    <property type="interactions" value="36"/>
</dbReference>
<dbReference type="MINT" id="P08134"/>
<dbReference type="STRING" id="9606.ENSP00000285735"/>
<dbReference type="BindingDB" id="P08134"/>
<dbReference type="ChEMBL" id="CHEMBL5465545"/>
<dbReference type="GlyCosmos" id="P08134">
    <property type="glycosylation" value="2 sites, No reported glycans"/>
</dbReference>
<dbReference type="GlyGen" id="P08134">
    <property type="glycosylation" value="3 sites, 1 O-linked glycan (1 site)"/>
</dbReference>
<dbReference type="iPTMnet" id="P08134"/>
<dbReference type="MetOSite" id="P08134"/>
<dbReference type="PhosphoSitePlus" id="P08134"/>
<dbReference type="SwissPalm" id="P08134"/>
<dbReference type="BioMuta" id="RHOC"/>
<dbReference type="DMDM" id="132543"/>
<dbReference type="jPOST" id="P08134"/>
<dbReference type="MassIVE" id="P08134"/>
<dbReference type="PaxDb" id="9606-ENSP00000285735"/>
<dbReference type="PeptideAtlas" id="P08134"/>
<dbReference type="ProteomicsDB" id="52072"/>
<dbReference type="Pumba" id="P08134"/>
<dbReference type="TopDownProteomics" id="P08134"/>
<dbReference type="ABCD" id="P08134">
    <property type="antibodies" value="17 sequenced antibodies"/>
</dbReference>
<dbReference type="Antibodypedia" id="33829">
    <property type="antibodies" value="366 antibodies from 31 providers"/>
</dbReference>
<dbReference type="DNASU" id="389"/>
<dbReference type="Ensembl" id="ENST00000285735.6">
    <property type="protein sequence ID" value="ENSP00000285735.2"/>
    <property type="gene ID" value="ENSG00000155366.17"/>
</dbReference>
<dbReference type="Ensembl" id="ENST00000339083.12">
    <property type="protein sequence ID" value="ENSP00000345236.8"/>
    <property type="gene ID" value="ENSG00000155366.17"/>
</dbReference>
<dbReference type="Ensembl" id="ENST00000369632.6">
    <property type="protein sequence ID" value="ENSP00000358646.2"/>
    <property type="gene ID" value="ENSG00000155366.17"/>
</dbReference>
<dbReference type="Ensembl" id="ENST00000369633.6">
    <property type="protein sequence ID" value="ENSP00000358647.2"/>
    <property type="gene ID" value="ENSG00000155366.17"/>
</dbReference>
<dbReference type="Ensembl" id="ENST00000369637.5">
    <property type="protein sequence ID" value="ENSP00000358651.1"/>
    <property type="gene ID" value="ENSG00000155366.17"/>
</dbReference>
<dbReference type="Ensembl" id="ENST00000369638.6">
    <property type="protein sequence ID" value="ENSP00000358652.2"/>
    <property type="gene ID" value="ENSG00000155366.17"/>
</dbReference>
<dbReference type="Ensembl" id="ENST00000369642.7">
    <property type="protein sequence ID" value="ENSP00000358656.3"/>
    <property type="gene ID" value="ENSG00000155366.17"/>
</dbReference>
<dbReference type="GeneID" id="389"/>
<dbReference type="KEGG" id="hsa:389"/>
<dbReference type="MANE-Select" id="ENST00000339083.12">
    <property type="protein sequence ID" value="ENSP00000345236.8"/>
    <property type="RefSeq nucleotide sequence ID" value="NM_175744.5"/>
    <property type="RefSeq protein sequence ID" value="NP_786886.1"/>
</dbReference>
<dbReference type="UCSC" id="uc001ecp.1">
    <property type="organism name" value="human"/>
</dbReference>
<dbReference type="AGR" id="HGNC:669"/>
<dbReference type="CTD" id="389"/>
<dbReference type="DisGeNET" id="389"/>
<dbReference type="GeneCards" id="RHOC"/>
<dbReference type="HGNC" id="HGNC:669">
    <property type="gene designation" value="RHOC"/>
</dbReference>
<dbReference type="HPA" id="ENSG00000155366">
    <property type="expression patterns" value="Low tissue specificity"/>
</dbReference>
<dbReference type="MIM" id="165380">
    <property type="type" value="gene"/>
</dbReference>
<dbReference type="neXtProt" id="NX_P08134"/>
<dbReference type="OpenTargets" id="ENSG00000155366"/>
<dbReference type="PharmGKB" id="PA24951"/>
<dbReference type="VEuPathDB" id="HostDB:ENSG00000155366"/>
<dbReference type="eggNOG" id="KOG0393">
    <property type="taxonomic scope" value="Eukaryota"/>
</dbReference>
<dbReference type="GeneTree" id="ENSGT00950000182945"/>
<dbReference type="InParanoid" id="P08134"/>
<dbReference type="OMA" id="EERPQMA"/>
<dbReference type="OrthoDB" id="8830751at2759"/>
<dbReference type="PAN-GO" id="P08134">
    <property type="GO annotations" value="14 GO annotations based on evolutionary models"/>
</dbReference>
<dbReference type="PhylomeDB" id="P08134"/>
<dbReference type="TreeFam" id="TF300837"/>
<dbReference type="BRENDA" id="3.6.5.2">
    <property type="organism ID" value="2681"/>
</dbReference>
<dbReference type="PathwayCommons" id="P08134"/>
<dbReference type="Reactome" id="R-HSA-416482">
    <property type="pathway name" value="G alpha (12/13) signalling events"/>
</dbReference>
<dbReference type="Reactome" id="R-HSA-416572">
    <property type="pathway name" value="Sema4D induced cell migration and growth-cone collapse"/>
</dbReference>
<dbReference type="Reactome" id="R-HSA-5625740">
    <property type="pathway name" value="RHO GTPases activate PKNs"/>
</dbReference>
<dbReference type="Reactome" id="R-HSA-5625900">
    <property type="pathway name" value="RHO GTPases activate CIT"/>
</dbReference>
<dbReference type="Reactome" id="R-HSA-5627117">
    <property type="pathway name" value="RHO GTPases Activate ROCKs"/>
</dbReference>
<dbReference type="Reactome" id="R-HSA-5663220">
    <property type="pathway name" value="RHO GTPases Activate Formins"/>
</dbReference>
<dbReference type="Reactome" id="R-HSA-5666185">
    <property type="pathway name" value="RHO GTPases Activate Rhotekin and Rhophilins"/>
</dbReference>
<dbReference type="Reactome" id="R-HSA-9013106">
    <property type="pathway name" value="RHOC GTPase cycle"/>
</dbReference>
<dbReference type="SignaLink" id="P08134"/>
<dbReference type="SIGNOR" id="P08134"/>
<dbReference type="BioGRID-ORCS" id="389">
    <property type="hits" value="22 hits in 1158 CRISPR screens"/>
</dbReference>
<dbReference type="ChiTaRS" id="RHOC">
    <property type="organism name" value="human"/>
</dbReference>
<dbReference type="EvolutionaryTrace" id="P08134"/>
<dbReference type="GeneWiki" id="RhoC"/>
<dbReference type="GenomeRNAi" id="389"/>
<dbReference type="Pharos" id="P08134">
    <property type="development level" value="Tbio"/>
</dbReference>
<dbReference type="PRO" id="PR:P08134"/>
<dbReference type="Proteomes" id="UP000005640">
    <property type="component" value="Chromosome 1"/>
</dbReference>
<dbReference type="RNAct" id="P08134">
    <property type="molecule type" value="protein"/>
</dbReference>
<dbReference type="Bgee" id="ENSG00000155366">
    <property type="expression patterns" value="Expressed in mucosa of transverse colon and 109 other cell types or tissues"/>
</dbReference>
<dbReference type="ExpressionAtlas" id="P08134">
    <property type="expression patterns" value="baseline and differential"/>
</dbReference>
<dbReference type="GO" id="GO:0032154">
    <property type="term" value="C:cleavage furrow"/>
    <property type="evidence" value="ECO:0000314"/>
    <property type="project" value="UniProtKB"/>
</dbReference>
<dbReference type="GO" id="GO:0005829">
    <property type="term" value="C:cytosol"/>
    <property type="evidence" value="ECO:0000318"/>
    <property type="project" value="GO_Central"/>
</dbReference>
<dbReference type="GO" id="GO:0005789">
    <property type="term" value="C:endoplasmic reticulum membrane"/>
    <property type="evidence" value="ECO:0000304"/>
    <property type="project" value="Reactome"/>
</dbReference>
<dbReference type="GO" id="GO:0070062">
    <property type="term" value="C:extracellular exosome"/>
    <property type="evidence" value="ECO:0007005"/>
    <property type="project" value="UniProtKB"/>
</dbReference>
<dbReference type="GO" id="GO:0005634">
    <property type="term" value="C:nucleus"/>
    <property type="evidence" value="ECO:0007669"/>
    <property type="project" value="Ensembl"/>
</dbReference>
<dbReference type="GO" id="GO:0005886">
    <property type="term" value="C:plasma membrane"/>
    <property type="evidence" value="ECO:0000318"/>
    <property type="project" value="GO_Central"/>
</dbReference>
<dbReference type="GO" id="GO:0032420">
    <property type="term" value="C:stereocilium"/>
    <property type="evidence" value="ECO:0000250"/>
    <property type="project" value="UniProtKB"/>
</dbReference>
<dbReference type="GO" id="GO:0005525">
    <property type="term" value="F:GTP binding"/>
    <property type="evidence" value="ECO:0000318"/>
    <property type="project" value="GO_Central"/>
</dbReference>
<dbReference type="GO" id="GO:0003924">
    <property type="term" value="F:GTPase activity"/>
    <property type="evidence" value="ECO:0000318"/>
    <property type="project" value="GO_Central"/>
</dbReference>
<dbReference type="GO" id="GO:0019901">
    <property type="term" value="F:protein kinase binding"/>
    <property type="evidence" value="ECO:0000318"/>
    <property type="project" value="GO_Central"/>
</dbReference>
<dbReference type="GO" id="GO:0007015">
    <property type="term" value="P:actin filament organization"/>
    <property type="evidence" value="ECO:0000318"/>
    <property type="project" value="GO_Central"/>
</dbReference>
<dbReference type="GO" id="GO:0043297">
    <property type="term" value="P:apical junction assembly"/>
    <property type="evidence" value="ECO:0000314"/>
    <property type="project" value="UniProtKB"/>
</dbReference>
<dbReference type="GO" id="GO:0016477">
    <property type="term" value="P:cell migration"/>
    <property type="evidence" value="ECO:0000318"/>
    <property type="project" value="GO_Central"/>
</dbReference>
<dbReference type="GO" id="GO:0000281">
    <property type="term" value="P:mitotic cytokinesis"/>
    <property type="evidence" value="ECO:0000314"/>
    <property type="project" value="UniProtKB"/>
</dbReference>
<dbReference type="GO" id="GO:0043123">
    <property type="term" value="P:positive regulation of canonical NF-kappaB signal transduction"/>
    <property type="evidence" value="ECO:0007001"/>
    <property type="project" value="UniProtKB"/>
</dbReference>
<dbReference type="GO" id="GO:0030335">
    <property type="term" value="P:positive regulation of cell migration"/>
    <property type="evidence" value="ECO:0000315"/>
    <property type="project" value="BHF-UCL"/>
</dbReference>
<dbReference type="GO" id="GO:0060193">
    <property type="term" value="P:positive regulation of lipase activity"/>
    <property type="evidence" value="ECO:0000314"/>
    <property type="project" value="AgBase"/>
</dbReference>
<dbReference type="GO" id="GO:0031334">
    <property type="term" value="P:positive regulation of protein-containing complex assembly"/>
    <property type="evidence" value="ECO:0000250"/>
    <property type="project" value="UniProtKB"/>
</dbReference>
<dbReference type="GO" id="GO:0051496">
    <property type="term" value="P:positive regulation of stress fiber assembly"/>
    <property type="evidence" value="ECO:0000315"/>
    <property type="project" value="BHF-UCL"/>
</dbReference>
<dbReference type="GO" id="GO:0032956">
    <property type="term" value="P:regulation of actin cytoskeleton organization"/>
    <property type="evidence" value="ECO:0000318"/>
    <property type="project" value="GO_Central"/>
</dbReference>
<dbReference type="GO" id="GO:0007165">
    <property type="term" value="P:signal transduction"/>
    <property type="evidence" value="ECO:0000318"/>
    <property type="project" value="GO_Central"/>
</dbReference>
<dbReference type="GO" id="GO:1902766">
    <property type="term" value="P:skeletal muscle satellite cell migration"/>
    <property type="evidence" value="ECO:0000250"/>
    <property type="project" value="AgBase"/>
</dbReference>
<dbReference type="GO" id="GO:0007264">
    <property type="term" value="P:small GTPase-mediated signal transduction"/>
    <property type="evidence" value="ECO:0007669"/>
    <property type="project" value="InterPro"/>
</dbReference>
<dbReference type="GO" id="GO:0044319">
    <property type="term" value="P:wound healing, spreading of cells"/>
    <property type="evidence" value="ECO:0000250"/>
    <property type="project" value="AgBase"/>
</dbReference>
<dbReference type="CDD" id="cd01870">
    <property type="entry name" value="RhoA_like"/>
    <property type="match status" value="1"/>
</dbReference>
<dbReference type="FunFam" id="3.40.50.300:FF:000095">
    <property type="entry name" value="Rho-related GTP-binding protein RhoC"/>
    <property type="match status" value="1"/>
</dbReference>
<dbReference type="Gene3D" id="3.40.50.300">
    <property type="entry name" value="P-loop containing nucleotide triphosphate hydrolases"/>
    <property type="match status" value="1"/>
</dbReference>
<dbReference type="InterPro" id="IPR027417">
    <property type="entry name" value="P-loop_NTPase"/>
</dbReference>
<dbReference type="InterPro" id="IPR005225">
    <property type="entry name" value="Small_GTP-bd"/>
</dbReference>
<dbReference type="InterPro" id="IPR001806">
    <property type="entry name" value="Small_GTPase"/>
</dbReference>
<dbReference type="InterPro" id="IPR003578">
    <property type="entry name" value="Small_GTPase_Rho"/>
</dbReference>
<dbReference type="NCBIfam" id="TIGR00231">
    <property type="entry name" value="small_GTP"/>
    <property type="match status" value="1"/>
</dbReference>
<dbReference type="PANTHER" id="PTHR24072">
    <property type="entry name" value="RHO FAMILY GTPASE"/>
    <property type="match status" value="1"/>
</dbReference>
<dbReference type="Pfam" id="PF00071">
    <property type="entry name" value="Ras"/>
    <property type="match status" value="1"/>
</dbReference>
<dbReference type="PRINTS" id="PR00449">
    <property type="entry name" value="RASTRNSFRMNG"/>
</dbReference>
<dbReference type="SMART" id="SM00175">
    <property type="entry name" value="RAB"/>
    <property type="match status" value="1"/>
</dbReference>
<dbReference type="SMART" id="SM00173">
    <property type="entry name" value="RAS"/>
    <property type="match status" value="1"/>
</dbReference>
<dbReference type="SMART" id="SM00174">
    <property type="entry name" value="RHO"/>
    <property type="match status" value="1"/>
</dbReference>
<dbReference type="SUPFAM" id="SSF52540">
    <property type="entry name" value="P-loop containing nucleoside triphosphate hydrolases"/>
    <property type="match status" value="1"/>
</dbReference>
<dbReference type="PROSITE" id="PS51420">
    <property type="entry name" value="RHO"/>
    <property type="match status" value="1"/>
</dbReference>
<feature type="chain" id="PRO_0000042022" description="Rho-related GTP-binding protein RhoC">
    <location>
        <begin position="1"/>
        <end position="190"/>
    </location>
</feature>
<feature type="propeptide" id="PRO_0000042023" description="Removed in mature form" evidence="1">
    <location>
        <begin position="191"/>
        <end position="193"/>
    </location>
</feature>
<feature type="short sequence motif" description="Effector region" evidence="4">
    <location>
        <begin position="34"/>
        <end position="42"/>
    </location>
</feature>
<feature type="binding site" evidence="1">
    <location>
        <begin position="12"/>
        <end position="19"/>
    </location>
    <ligand>
        <name>GTP</name>
        <dbReference type="ChEBI" id="CHEBI:37565"/>
    </ligand>
</feature>
<feature type="binding site" evidence="1">
    <location>
        <begin position="59"/>
        <end position="63"/>
    </location>
    <ligand>
        <name>GTP</name>
        <dbReference type="ChEBI" id="CHEBI:37565"/>
    </ligand>
</feature>
<feature type="binding site" evidence="1">
    <location>
        <begin position="117"/>
        <end position="120"/>
    </location>
    <ligand>
        <name>GTP</name>
        <dbReference type="ChEBI" id="CHEBI:37565"/>
    </ligand>
</feature>
<feature type="modified residue" description="ADP-ribosylasparagine; by botulinum toxin" evidence="1">
    <location>
        <position position="41"/>
    </location>
</feature>
<feature type="modified residue" description="Cysteine methyl ester" evidence="2">
    <location>
        <position position="190"/>
    </location>
</feature>
<feature type="lipid moiety-binding region" description="S-geranylgeranyl cysteine" evidence="2">
    <location>
        <position position="190"/>
    </location>
</feature>
<feature type="glycosylation site" description="O-linked (GlcNAc) tyrosine; by Photorhabdus PAU_02230" evidence="10">
    <location>
        <position position="34"/>
    </location>
</feature>
<feature type="glycosylation site" description="(Microbial infection) O-linked (Glc) threonine; by C.difficile toxins TcdA and TcdB" evidence="11">
    <location>
        <position position="37"/>
    </location>
</feature>
<feature type="sequence variant" id="VAR_051974" description="In dbSNP:rs11538959.">
    <original>D</original>
    <variation>H</variation>
    <location>
        <position position="120"/>
    </location>
</feature>
<feature type="strand" evidence="15">
    <location>
        <begin position="4"/>
        <end position="13"/>
    </location>
</feature>
<feature type="helix" evidence="15">
    <location>
        <begin position="18"/>
        <end position="27"/>
    </location>
</feature>
<feature type="strand" evidence="15">
    <location>
        <begin position="43"/>
        <end position="48"/>
    </location>
</feature>
<feature type="strand" evidence="15">
    <location>
        <begin position="51"/>
        <end position="58"/>
    </location>
</feature>
<feature type="helix" evidence="15">
    <location>
        <begin position="64"/>
        <end position="66"/>
    </location>
</feature>
<feature type="turn" evidence="15">
    <location>
        <begin position="67"/>
        <end position="69"/>
    </location>
</feature>
<feature type="helix" evidence="15">
    <location>
        <begin position="70"/>
        <end position="73"/>
    </location>
</feature>
<feature type="strand" evidence="15">
    <location>
        <begin position="78"/>
        <end position="85"/>
    </location>
</feature>
<feature type="helix" evidence="15">
    <location>
        <begin position="89"/>
        <end position="97"/>
    </location>
</feature>
<feature type="helix" evidence="15">
    <location>
        <begin position="99"/>
        <end position="106"/>
    </location>
</feature>
<feature type="strand" evidence="15">
    <location>
        <begin position="112"/>
        <end position="117"/>
    </location>
</feature>
<feature type="helix" evidence="15">
    <location>
        <begin position="119"/>
        <end position="121"/>
    </location>
</feature>
<feature type="helix" evidence="15">
    <location>
        <begin position="125"/>
        <end position="132"/>
    </location>
</feature>
<feature type="turn" evidence="15">
    <location>
        <begin position="133"/>
        <end position="135"/>
    </location>
</feature>
<feature type="helix" evidence="15">
    <location>
        <begin position="141"/>
        <end position="150"/>
    </location>
</feature>
<feature type="strand" evidence="15">
    <location>
        <begin position="154"/>
        <end position="158"/>
    </location>
</feature>
<feature type="turn" evidence="15">
    <location>
        <begin position="161"/>
        <end position="163"/>
    </location>
</feature>
<feature type="helix" evidence="15">
    <location>
        <begin position="167"/>
        <end position="179"/>
    </location>
</feature>